<name>SSL3_STAAE</name>
<accession>A0A0H3KEE1</accession>
<feature type="signal peptide" evidence="2">
    <location>
        <begin position="1"/>
        <end position="30"/>
    </location>
</feature>
<feature type="chain" id="PRO_5002613612" description="Staphylococcal superantigen-like 3" evidence="2">
    <location>
        <begin position="31"/>
        <end position="352"/>
    </location>
</feature>
<feature type="region of interest" description="Disordered" evidence="3">
    <location>
        <begin position="61"/>
        <end position="165"/>
    </location>
</feature>
<feature type="region of interest" description="Sialyl Lewis X-binding" evidence="1">
    <location>
        <begin position="228"/>
        <end position="326"/>
    </location>
</feature>
<feature type="compositionally biased region" description="Basic and acidic residues" evidence="3">
    <location>
        <begin position="69"/>
        <end position="104"/>
    </location>
</feature>
<feature type="compositionally biased region" description="Low complexity" evidence="3">
    <location>
        <begin position="114"/>
        <end position="141"/>
    </location>
</feature>
<feature type="compositionally biased region" description="Polar residues" evidence="3">
    <location>
        <begin position="142"/>
        <end position="164"/>
    </location>
</feature>
<sequence length="352" mass="39739">MKMRTIAKTSLALGLLTTGAITVTTQSVKAEKIQSTKVDKVPTLKAERLAMINITAGANSATTQAANTRQERTPKLEKAPNTNEEKTSASKIEKISQPKQEEQKTLNISATPAPKQEQSQTTTESTTPKTKVTTPPSTNTPQPMQSTKSDTPQSPTIKQAQTDMTPKYEDLRAYYTKPSFEFEKQFGFMLKPWTTVRFMNVIPNRFIYKIALVGKDEKKYKDGPYDNIDVFIVLEDNKYQLKKYSVGGITKTNSKKVNHKVELSITKKDNQGMISRDVSEYMITKEEISLKELDFKLRKQLIEKHNLYGNMGSGTIVIKMKNGGKYTFELHKKLQEHRMAGTNIDNIEVNIK</sequence>
<comment type="function">
    <text evidence="1">Secreted protein that plays an essential role in immune innate response inhibition by interacting with and inhibiting host TLR2. In turn, bacteria recognition by immune cells is impaired and cytokine production is inhibited. Mechanistically, by interacting with TLR2, blocks ligand binding and thus inhibits activation. Second, by interacting with an already formed TLR2-lipopeptide complex, prevents TLR heterodimerization and downstream signaling. The interaction with host TLR2 does not involve sialyl Lewis X interactions.</text>
</comment>
<comment type="subunit">
    <text evidence="1">Interacts with host TLR2 (via its extracellular domain).</text>
</comment>
<comment type="subcellular location">
    <subcellularLocation>
        <location evidence="1">Secreted</location>
    </subcellularLocation>
</comment>
<comment type="domain">
    <text evidence="1">The C-terminal domain contains a V-shape binding site for sialyl Lewis X.</text>
</comment>
<comment type="similarity">
    <text evidence="4">Belongs to the staphylococcal/streptococcal toxin family.</text>
</comment>
<organism>
    <name type="scientific">Staphylococcus aureus (strain Newman)</name>
    <dbReference type="NCBI Taxonomy" id="426430"/>
    <lineage>
        <taxon>Bacteria</taxon>
        <taxon>Bacillati</taxon>
        <taxon>Bacillota</taxon>
        <taxon>Bacilli</taxon>
        <taxon>Bacillales</taxon>
        <taxon>Staphylococcaceae</taxon>
        <taxon>Staphylococcus</taxon>
    </lineage>
</organism>
<proteinExistence type="inferred from homology"/>
<evidence type="ECO:0000250" key="1">
    <source>
        <dbReference type="UniProtKB" id="Q2G0X7"/>
    </source>
</evidence>
<evidence type="ECO:0000255" key="2"/>
<evidence type="ECO:0000256" key="3">
    <source>
        <dbReference type="SAM" id="MobiDB-lite"/>
    </source>
</evidence>
<evidence type="ECO:0000305" key="4"/>
<keyword id="KW-0964">Secreted</keyword>
<keyword id="KW-0732">Signal</keyword>
<keyword id="KW-0843">Virulence</keyword>
<gene>
    <name evidence="1" type="primary">ssl3</name>
    <name type="ordered locus">NWMN_0390</name>
</gene>
<reference key="1">
    <citation type="journal article" date="2008" name="J. Bacteriol.">
        <title>Genome sequence of Staphylococcus aureus strain Newman and comparative analysis of staphylococcal genomes: polymorphism and evolution of two major pathogenicity islands.</title>
        <authorList>
            <person name="Baba T."/>
            <person name="Bae T."/>
            <person name="Schneewind O."/>
            <person name="Takeuchi F."/>
            <person name="Hiramatsu K."/>
        </authorList>
    </citation>
    <scope>NUCLEOTIDE SEQUENCE [LARGE SCALE GENOMIC DNA]</scope>
    <source>
        <strain>Newman</strain>
    </source>
</reference>
<protein>
    <recommendedName>
        <fullName evidence="1">Staphylococcal superantigen-like 3</fullName>
    </recommendedName>
</protein>
<dbReference type="EMBL" id="AP009351">
    <property type="protein sequence ID" value="BAF66662.1"/>
    <property type="molecule type" value="Genomic_DNA"/>
</dbReference>
<dbReference type="RefSeq" id="WP_000784024.1">
    <property type="nucleotide sequence ID" value="NZ_JBBIAE010000011.1"/>
</dbReference>
<dbReference type="SMR" id="A0A0H3KEE1"/>
<dbReference type="KEGG" id="sae:NWMN_0390"/>
<dbReference type="HOGENOM" id="CLU_054950_1_0_9"/>
<dbReference type="Proteomes" id="UP000006386">
    <property type="component" value="Chromosome"/>
</dbReference>
<dbReference type="GO" id="GO:0005576">
    <property type="term" value="C:extracellular region"/>
    <property type="evidence" value="ECO:0007669"/>
    <property type="project" value="UniProtKB-SubCell"/>
</dbReference>
<dbReference type="Gene3D" id="2.40.50.110">
    <property type="match status" value="1"/>
</dbReference>
<dbReference type="Gene3D" id="3.10.20.120">
    <property type="match status" value="1"/>
</dbReference>
<dbReference type="InterPro" id="IPR008992">
    <property type="entry name" value="Enterotoxin"/>
</dbReference>
<dbReference type="InterPro" id="IPR015282">
    <property type="entry name" value="SSL_OB"/>
</dbReference>
<dbReference type="InterPro" id="IPR006126">
    <property type="entry name" value="Staph/Strept_toxin_CS"/>
</dbReference>
<dbReference type="InterPro" id="IPR008375">
    <property type="entry name" value="Staph_exotoxin"/>
</dbReference>
<dbReference type="InterPro" id="IPR016091">
    <property type="entry name" value="SuperAg_toxin_C"/>
</dbReference>
<dbReference type="InterPro" id="IPR013307">
    <property type="entry name" value="Superantigen_bac"/>
</dbReference>
<dbReference type="InterPro" id="IPR006123">
    <property type="entry name" value="Toxin_b-grasp_Staph/Strep"/>
</dbReference>
<dbReference type="NCBIfam" id="NF009873">
    <property type="entry name" value="PRK13335.1"/>
    <property type="match status" value="1"/>
</dbReference>
<dbReference type="Pfam" id="PF09199">
    <property type="entry name" value="SSL_OB"/>
    <property type="match status" value="1"/>
</dbReference>
<dbReference type="Pfam" id="PF02876">
    <property type="entry name" value="Stap_Strp_tox_C"/>
    <property type="match status" value="1"/>
</dbReference>
<dbReference type="PRINTS" id="PR01898">
    <property type="entry name" value="SAGSUPRFAMLY"/>
</dbReference>
<dbReference type="PRINTS" id="PR01800">
    <property type="entry name" value="STAPHEXOTOXN"/>
</dbReference>
<dbReference type="SUPFAM" id="SSF50203">
    <property type="entry name" value="Bacterial enterotoxins"/>
    <property type="match status" value="1"/>
</dbReference>
<dbReference type="SUPFAM" id="SSF54334">
    <property type="entry name" value="Superantigen toxins, C-terminal domain"/>
    <property type="match status" value="1"/>
</dbReference>
<dbReference type="PROSITE" id="PS00278">
    <property type="entry name" value="STAPH_STREP_TOXIN_2"/>
    <property type="match status" value="1"/>
</dbReference>